<proteinExistence type="inferred from homology"/>
<comment type="function">
    <text evidence="1">Increases the formation of ribosomal termination complexes and stimulates activities of RF-1 and RF-2. It binds guanine nucleotides and has strong preference for UGA stop codons. It may interact directly with the ribosome. The stimulation of RF-1 and RF-2 is significantly reduced by GTP and GDP, but not by GMP.</text>
</comment>
<comment type="subcellular location">
    <subcellularLocation>
        <location evidence="1">Cytoplasm</location>
    </subcellularLocation>
</comment>
<comment type="similarity">
    <text evidence="1">Belongs to the TRAFAC class translation factor GTPase superfamily. Classic translation factor GTPase family. PrfC subfamily.</text>
</comment>
<gene>
    <name evidence="1" type="primary">prfC</name>
    <name type="ordered locus">YPTS_0597</name>
</gene>
<keyword id="KW-0963">Cytoplasm</keyword>
<keyword id="KW-0342">GTP-binding</keyword>
<keyword id="KW-0547">Nucleotide-binding</keyword>
<keyword id="KW-0648">Protein biosynthesis</keyword>
<dbReference type="EMBL" id="CP001048">
    <property type="protein sequence ID" value="ACC87581.1"/>
    <property type="molecule type" value="Genomic_DNA"/>
</dbReference>
<dbReference type="RefSeq" id="WP_011191681.1">
    <property type="nucleotide sequence ID" value="NZ_CP009780.1"/>
</dbReference>
<dbReference type="SMR" id="B2K3I2"/>
<dbReference type="GeneID" id="49787425"/>
<dbReference type="KEGG" id="ypb:YPTS_0597"/>
<dbReference type="PATRIC" id="fig|502801.10.peg.4275"/>
<dbReference type="GO" id="GO:0005829">
    <property type="term" value="C:cytosol"/>
    <property type="evidence" value="ECO:0007669"/>
    <property type="project" value="TreeGrafter"/>
</dbReference>
<dbReference type="GO" id="GO:0005525">
    <property type="term" value="F:GTP binding"/>
    <property type="evidence" value="ECO:0007669"/>
    <property type="project" value="UniProtKB-UniRule"/>
</dbReference>
<dbReference type="GO" id="GO:0003924">
    <property type="term" value="F:GTPase activity"/>
    <property type="evidence" value="ECO:0007669"/>
    <property type="project" value="InterPro"/>
</dbReference>
<dbReference type="GO" id="GO:0097216">
    <property type="term" value="F:guanosine tetraphosphate binding"/>
    <property type="evidence" value="ECO:0007669"/>
    <property type="project" value="UniProtKB-ARBA"/>
</dbReference>
<dbReference type="GO" id="GO:0016150">
    <property type="term" value="F:translation release factor activity, codon nonspecific"/>
    <property type="evidence" value="ECO:0007669"/>
    <property type="project" value="TreeGrafter"/>
</dbReference>
<dbReference type="GO" id="GO:0016149">
    <property type="term" value="F:translation release factor activity, codon specific"/>
    <property type="evidence" value="ECO:0007669"/>
    <property type="project" value="UniProtKB-UniRule"/>
</dbReference>
<dbReference type="GO" id="GO:0006449">
    <property type="term" value="P:regulation of translational termination"/>
    <property type="evidence" value="ECO:0007669"/>
    <property type="project" value="UniProtKB-UniRule"/>
</dbReference>
<dbReference type="CDD" id="cd04169">
    <property type="entry name" value="RF3"/>
    <property type="match status" value="1"/>
</dbReference>
<dbReference type="CDD" id="cd03689">
    <property type="entry name" value="RF3_II"/>
    <property type="match status" value="1"/>
</dbReference>
<dbReference type="CDD" id="cd16259">
    <property type="entry name" value="RF3_III"/>
    <property type="match status" value="1"/>
</dbReference>
<dbReference type="FunFam" id="2.40.30.10:FF:000040">
    <property type="entry name" value="Peptide chain release factor 3"/>
    <property type="match status" value="1"/>
</dbReference>
<dbReference type="FunFam" id="3.30.70.3280:FF:000001">
    <property type="entry name" value="Peptide chain release factor 3"/>
    <property type="match status" value="1"/>
</dbReference>
<dbReference type="FunFam" id="3.40.50.300:FF:000542">
    <property type="entry name" value="Peptide chain release factor 3"/>
    <property type="match status" value="1"/>
</dbReference>
<dbReference type="Gene3D" id="3.40.50.300">
    <property type="entry name" value="P-loop containing nucleotide triphosphate hydrolases"/>
    <property type="match status" value="2"/>
</dbReference>
<dbReference type="Gene3D" id="3.30.70.3280">
    <property type="entry name" value="Peptide chain release factor 3, domain III"/>
    <property type="match status" value="1"/>
</dbReference>
<dbReference type="HAMAP" id="MF_00072">
    <property type="entry name" value="Rel_fac_3"/>
    <property type="match status" value="1"/>
</dbReference>
<dbReference type="InterPro" id="IPR053905">
    <property type="entry name" value="EF-G-like_DII"/>
</dbReference>
<dbReference type="InterPro" id="IPR035647">
    <property type="entry name" value="EFG_III/V"/>
</dbReference>
<dbReference type="InterPro" id="IPR031157">
    <property type="entry name" value="G_TR_CS"/>
</dbReference>
<dbReference type="InterPro" id="IPR027417">
    <property type="entry name" value="P-loop_NTPase"/>
</dbReference>
<dbReference type="InterPro" id="IPR004548">
    <property type="entry name" value="PrfC"/>
</dbReference>
<dbReference type="InterPro" id="IPR032090">
    <property type="entry name" value="RF3_C"/>
</dbReference>
<dbReference type="InterPro" id="IPR038467">
    <property type="entry name" value="RF3_dom_3_sf"/>
</dbReference>
<dbReference type="InterPro" id="IPR041732">
    <property type="entry name" value="RF3_GTP-bd"/>
</dbReference>
<dbReference type="InterPro" id="IPR005225">
    <property type="entry name" value="Small_GTP-bd"/>
</dbReference>
<dbReference type="InterPro" id="IPR000795">
    <property type="entry name" value="T_Tr_GTP-bd_dom"/>
</dbReference>
<dbReference type="InterPro" id="IPR009000">
    <property type="entry name" value="Transl_B-barrel_sf"/>
</dbReference>
<dbReference type="NCBIfam" id="TIGR00503">
    <property type="entry name" value="prfC"/>
    <property type="match status" value="1"/>
</dbReference>
<dbReference type="NCBIfam" id="NF001964">
    <property type="entry name" value="PRK00741.1"/>
    <property type="match status" value="1"/>
</dbReference>
<dbReference type="NCBIfam" id="TIGR00231">
    <property type="entry name" value="small_GTP"/>
    <property type="match status" value="1"/>
</dbReference>
<dbReference type="PANTHER" id="PTHR43556">
    <property type="entry name" value="PEPTIDE CHAIN RELEASE FACTOR RF3"/>
    <property type="match status" value="1"/>
</dbReference>
<dbReference type="PANTHER" id="PTHR43556:SF2">
    <property type="entry name" value="PEPTIDE CHAIN RELEASE FACTOR RF3"/>
    <property type="match status" value="1"/>
</dbReference>
<dbReference type="Pfam" id="PF22042">
    <property type="entry name" value="EF-G_D2"/>
    <property type="match status" value="1"/>
</dbReference>
<dbReference type="Pfam" id="PF00009">
    <property type="entry name" value="GTP_EFTU"/>
    <property type="match status" value="1"/>
</dbReference>
<dbReference type="Pfam" id="PF16658">
    <property type="entry name" value="RF3_C"/>
    <property type="match status" value="1"/>
</dbReference>
<dbReference type="PRINTS" id="PR00315">
    <property type="entry name" value="ELONGATNFCT"/>
</dbReference>
<dbReference type="SUPFAM" id="SSF54980">
    <property type="entry name" value="EF-G C-terminal domain-like"/>
    <property type="match status" value="1"/>
</dbReference>
<dbReference type="SUPFAM" id="SSF52540">
    <property type="entry name" value="P-loop containing nucleoside triphosphate hydrolases"/>
    <property type="match status" value="1"/>
</dbReference>
<dbReference type="SUPFAM" id="SSF50447">
    <property type="entry name" value="Translation proteins"/>
    <property type="match status" value="1"/>
</dbReference>
<dbReference type="PROSITE" id="PS00301">
    <property type="entry name" value="G_TR_1"/>
    <property type="match status" value="1"/>
</dbReference>
<dbReference type="PROSITE" id="PS51722">
    <property type="entry name" value="G_TR_2"/>
    <property type="match status" value="1"/>
</dbReference>
<name>RF3_YERPB</name>
<organism>
    <name type="scientific">Yersinia pseudotuberculosis serotype IB (strain PB1/+)</name>
    <dbReference type="NCBI Taxonomy" id="502801"/>
    <lineage>
        <taxon>Bacteria</taxon>
        <taxon>Pseudomonadati</taxon>
        <taxon>Pseudomonadota</taxon>
        <taxon>Gammaproteobacteria</taxon>
        <taxon>Enterobacterales</taxon>
        <taxon>Yersiniaceae</taxon>
        <taxon>Yersinia</taxon>
    </lineage>
</organism>
<accession>B2K3I2</accession>
<feature type="chain" id="PRO_1000092514" description="Peptide chain release factor 3">
    <location>
        <begin position="1"/>
        <end position="529"/>
    </location>
</feature>
<feature type="domain" description="tr-type G">
    <location>
        <begin position="11"/>
        <end position="280"/>
    </location>
</feature>
<feature type="binding site" evidence="1">
    <location>
        <begin position="20"/>
        <end position="27"/>
    </location>
    <ligand>
        <name>GTP</name>
        <dbReference type="ChEBI" id="CHEBI:37565"/>
    </ligand>
</feature>
<feature type="binding site" evidence="1">
    <location>
        <begin position="88"/>
        <end position="92"/>
    </location>
    <ligand>
        <name>GTP</name>
        <dbReference type="ChEBI" id="CHEBI:37565"/>
    </ligand>
</feature>
<feature type="binding site" evidence="1">
    <location>
        <begin position="142"/>
        <end position="145"/>
    </location>
    <ligand>
        <name>GTP</name>
        <dbReference type="ChEBI" id="CHEBI:37565"/>
    </ligand>
</feature>
<evidence type="ECO:0000255" key="1">
    <source>
        <dbReference type="HAMAP-Rule" id="MF_00072"/>
    </source>
</evidence>
<reference key="1">
    <citation type="submission" date="2008-04" db="EMBL/GenBank/DDBJ databases">
        <title>Complete sequence of Yersinia pseudotuberculosis PB1/+.</title>
        <authorList>
            <person name="Copeland A."/>
            <person name="Lucas S."/>
            <person name="Lapidus A."/>
            <person name="Glavina del Rio T."/>
            <person name="Dalin E."/>
            <person name="Tice H."/>
            <person name="Bruce D."/>
            <person name="Goodwin L."/>
            <person name="Pitluck S."/>
            <person name="Munk A.C."/>
            <person name="Brettin T."/>
            <person name="Detter J.C."/>
            <person name="Han C."/>
            <person name="Tapia R."/>
            <person name="Schmutz J."/>
            <person name="Larimer F."/>
            <person name="Land M."/>
            <person name="Hauser L."/>
            <person name="Challacombe J.F."/>
            <person name="Green L."/>
            <person name="Lindler L.E."/>
            <person name="Nikolich M.P."/>
            <person name="Richardson P."/>
        </authorList>
    </citation>
    <scope>NUCLEOTIDE SEQUENCE [LARGE SCALE GENOMIC DNA]</scope>
    <source>
        <strain>PB1/+</strain>
    </source>
</reference>
<protein>
    <recommendedName>
        <fullName evidence="1">Peptide chain release factor 3</fullName>
        <shortName evidence="1">RF-3</shortName>
    </recommendedName>
</protein>
<sequence>MSPSEYALEVAKRRTFAIISHPDAGKTTITEKVLLFGHAIQTAGTVKGRGSSHHAKSDWMEMEKQRGISITTSVMQFPYGGCLVNLLDTPGHEDFSEDTYRTLTAVDCCLMVIDAAKGVEDRTRKLMEVTRLRDTPILTFMNKLDREIRDPMEVLDEVERELNIACSPITWPIGCGKSFKGVYHLHKDETYLYQSGKGHTIQEVRIVKGLNNPDLDVAVGEDLAKQFRQELELVQGASHEFDHEAFLSGDLTPVFFGTALGNFGVDHMLDGLVEWAPAPMPRKTDTRVVVASEEKFTGFVFKIQANMDPKHRDRVAFMRVVSGRFEKGMKLRQVRTKKDVVISDALTFMAGDRSHVEEAYAGDIIGLHNHGTIQIGDTFTQGEDMKFTGIPNFAPELFRRIRLRDPLKQKQLLKGLVQLSEEGAVQVFRPLSNNDLIVGAVGVLQFEVVSSRLKSEYNVEAVYESVNVSTARWVECNDVKKFEEFKRKNELNLALDGGDNLSYIAPTMVNLNITQERYPDVIFRKTREH</sequence>